<evidence type="ECO:0000250" key="1">
    <source>
        <dbReference type="UniProtKB" id="Q46891"/>
    </source>
</evidence>
<evidence type="ECO:0000250" key="2">
    <source>
        <dbReference type="UniProtKB" id="Q9WYP7"/>
    </source>
</evidence>
<evidence type="ECO:0000269" key="3">
    <source>
    </source>
</evidence>
<evidence type="ECO:0000303" key="4">
    <source>
    </source>
</evidence>
<evidence type="ECO:0000305" key="5"/>
<comment type="function">
    <text evidence="3">Catalyzes the isomerization of 2-oxo-tetronate to 3-oxo-tetronate.</text>
</comment>
<comment type="catalytic activity">
    <reaction evidence="3">
        <text>2-dehydro-L-erythronate = 3-dehydro-L-erythronate</text>
        <dbReference type="Rhea" id="RHEA:52564"/>
        <dbReference type="ChEBI" id="CHEBI:136669"/>
        <dbReference type="ChEBI" id="CHEBI:136670"/>
        <dbReference type="EC" id="5.3.1.35"/>
    </reaction>
</comment>
<comment type="catalytic activity">
    <reaction evidence="3">
        <text>2-dehydro-D-erythronate = 3-dehydro-D-erythronate</text>
        <dbReference type="Rhea" id="RHEA:52560"/>
        <dbReference type="ChEBI" id="CHEBI:57958"/>
        <dbReference type="ChEBI" id="CHEBI:136668"/>
        <dbReference type="EC" id="5.3.1.35"/>
    </reaction>
</comment>
<comment type="similarity">
    <text evidence="5">Belongs to the hyi family. OtnI subfamily.</text>
</comment>
<name>OTNI_HAEIN</name>
<dbReference type="EC" id="5.3.1.35" evidence="3"/>
<dbReference type="EMBL" id="L42023">
    <property type="protein sequence ID" value="AAC22674.1"/>
    <property type="molecule type" value="Genomic_DNA"/>
</dbReference>
<dbReference type="PIR" id="C64108">
    <property type="entry name" value="C64108"/>
</dbReference>
<dbReference type="RefSeq" id="NP_439174.1">
    <property type="nucleotide sequence ID" value="NC_000907.1"/>
</dbReference>
<dbReference type="SMR" id="Q57151"/>
<dbReference type="STRING" id="71421.HI_1013"/>
<dbReference type="EnsemblBacteria" id="AAC22674">
    <property type="protein sequence ID" value="AAC22674"/>
    <property type="gene ID" value="HI_1013"/>
</dbReference>
<dbReference type="KEGG" id="hin:HI_1013"/>
<dbReference type="PATRIC" id="fig|71421.8.peg.1057"/>
<dbReference type="eggNOG" id="COG3622">
    <property type="taxonomic scope" value="Bacteria"/>
</dbReference>
<dbReference type="HOGENOM" id="CLU_050006_1_2_6"/>
<dbReference type="OrthoDB" id="9786584at2"/>
<dbReference type="PhylomeDB" id="Q57151"/>
<dbReference type="BioCyc" id="HINF71421:G1GJ1-1053-MONOMER"/>
<dbReference type="BioCyc" id="MetaCyc:MONOMER-20183"/>
<dbReference type="Proteomes" id="UP000000579">
    <property type="component" value="Chromosome"/>
</dbReference>
<dbReference type="GO" id="GO:0008903">
    <property type="term" value="F:hydroxypyruvate isomerase activity"/>
    <property type="evidence" value="ECO:0000318"/>
    <property type="project" value="GO_Central"/>
</dbReference>
<dbReference type="GO" id="GO:0046872">
    <property type="term" value="F:metal ion binding"/>
    <property type="evidence" value="ECO:0007669"/>
    <property type="project" value="UniProtKB-KW"/>
</dbReference>
<dbReference type="GO" id="GO:0046487">
    <property type="term" value="P:glyoxylate metabolic process"/>
    <property type="evidence" value="ECO:0000318"/>
    <property type="project" value="GO_Central"/>
</dbReference>
<dbReference type="FunFam" id="3.20.20.150:FF:000007">
    <property type="entry name" value="Hydroxypyruvate isomerase"/>
    <property type="match status" value="1"/>
</dbReference>
<dbReference type="Gene3D" id="3.20.20.150">
    <property type="entry name" value="Divalent-metal-dependent TIM barrel enzymes"/>
    <property type="match status" value="1"/>
</dbReference>
<dbReference type="InterPro" id="IPR053398">
    <property type="entry name" value="HPT_OtnI_isomerases"/>
</dbReference>
<dbReference type="InterPro" id="IPR026040">
    <property type="entry name" value="HyI-like"/>
</dbReference>
<dbReference type="InterPro" id="IPR050417">
    <property type="entry name" value="Sugar_Epim/Isomerase"/>
</dbReference>
<dbReference type="InterPro" id="IPR036237">
    <property type="entry name" value="Xyl_isomerase-like_sf"/>
</dbReference>
<dbReference type="InterPro" id="IPR013022">
    <property type="entry name" value="Xyl_isomerase-like_TIM-brl"/>
</dbReference>
<dbReference type="NCBIfam" id="NF043033">
    <property type="entry name" value="OxoTetrIsom"/>
    <property type="match status" value="1"/>
</dbReference>
<dbReference type="PANTHER" id="PTHR43489:SF6">
    <property type="entry name" value="HYDROXYPYRUVATE ISOMERASE-RELATED"/>
    <property type="match status" value="1"/>
</dbReference>
<dbReference type="PANTHER" id="PTHR43489">
    <property type="entry name" value="ISOMERASE"/>
    <property type="match status" value="1"/>
</dbReference>
<dbReference type="Pfam" id="PF01261">
    <property type="entry name" value="AP_endonuc_2"/>
    <property type="match status" value="1"/>
</dbReference>
<dbReference type="PIRSF" id="PIRSF006241">
    <property type="entry name" value="HyI"/>
    <property type="match status" value="1"/>
</dbReference>
<dbReference type="SUPFAM" id="SSF51658">
    <property type="entry name" value="Xylose isomerase-like"/>
    <property type="match status" value="1"/>
</dbReference>
<organism>
    <name type="scientific">Haemophilus influenzae (strain ATCC 51907 / DSM 11121 / KW20 / Rd)</name>
    <dbReference type="NCBI Taxonomy" id="71421"/>
    <lineage>
        <taxon>Bacteria</taxon>
        <taxon>Pseudomonadati</taxon>
        <taxon>Pseudomonadota</taxon>
        <taxon>Gammaproteobacteria</taxon>
        <taxon>Pasteurellales</taxon>
        <taxon>Pasteurellaceae</taxon>
        <taxon>Haemophilus</taxon>
    </lineage>
</organism>
<protein>
    <recommendedName>
        <fullName evidence="4">2-oxo-tetronate isomerase</fullName>
        <ecNumber evidence="3">5.3.1.35</ecNumber>
    </recommendedName>
    <alternativeName>
        <fullName evidence="5">2-dehydrotetronate isomerase</fullName>
    </alternativeName>
</protein>
<accession>Q57151</accession>
<gene>
    <name evidence="4" type="primary">otnI</name>
    <name type="ordered locus">HI_1013</name>
</gene>
<feature type="chain" id="PRO_0000209110" description="2-oxo-tetronate isomerase">
    <location>
        <begin position="1"/>
        <end position="258"/>
    </location>
</feature>
<feature type="active site" description="Proton donor/acceptor" evidence="2">
    <location>
        <position position="143"/>
    </location>
</feature>
<feature type="active site" description="Proton donor/acceptor" evidence="2">
    <location>
        <position position="240"/>
    </location>
</feature>
<feature type="binding site" evidence="1">
    <location>
        <position position="143"/>
    </location>
    <ligand>
        <name>Mg(2+)</name>
        <dbReference type="ChEBI" id="CHEBI:18420"/>
    </ligand>
</feature>
<feature type="binding site" evidence="1">
    <location>
        <position position="178"/>
    </location>
    <ligand>
        <name>Mg(2+)</name>
        <dbReference type="ChEBI" id="CHEBI:18420"/>
    </ligand>
</feature>
<feature type="binding site" evidence="1">
    <location>
        <position position="204"/>
    </location>
    <ligand>
        <name>Mg(2+)</name>
        <dbReference type="ChEBI" id="CHEBI:18420"/>
    </ligand>
</feature>
<feature type="binding site" evidence="1">
    <location>
        <position position="240"/>
    </location>
    <ligand>
        <name>Mg(2+)</name>
        <dbReference type="ChEBI" id="CHEBI:18420"/>
    </ligand>
</feature>
<reference key="1">
    <citation type="journal article" date="1995" name="Science">
        <title>Whole-genome random sequencing and assembly of Haemophilus influenzae Rd.</title>
        <authorList>
            <person name="Fleischmann R.D."/>
            <person name="Adams M.D."/>
            <person name="White O."/>
            <person name="Clayton R.A."/>
            <person name="Kirkness E.F."/>
            <person name="Kerlavage A.R."/>
            <person name="Bult C.J."/>
            <person name="Tomb J.-F."/>
            <person name="Dougherty B.A."/>
            <person name="Merrick J.M."/>
            <person name="McKenney K."/>
            <person name="Sutton G.G."/>
            <person name="FitzHugh W."/>
            <person name="Fields C.A."/>
            <person name="Gocayne J.D."/>
            <person name="Scott J.D."/>
            <person name="Shirley R."/>
            <person name="Liu L.-I."/>
            <person name="Glodek A."/>
            <person name="Kelley J.M."/>
            <person name="Weidman J.F."/>
            <person name="Phillips C.A."/>
            <person name="Spriggs T."/>
            <person name="Hedblom E."/>
            <person name="Cotton M.D."/>
            <person name="Utterback T.R."/>
            <person name="Hanna M.C."/>
            <person name="Nguyen D.T."/>
            <person name="Saudek D.M."/>
            <person name="Brandon R.C."/>
            <person name="Fine L.D."/>
            <person name="Fritchman J.L."/>
            <person name="Fuhrmann J.L."/>
            <person name="Geoghagen N.S.M."/>
            <person name="Gnehm C.L."/>
            <person name="McDonald L.A."/>
            <person name="Small K.V."/>
            <person name="Fraser C.M."/>
            <person name="Smith H.O."/>
            <person name="Venter J.C."/>
        </authorList>
    </citation>
    <scope>NUCLEOTIDE SEQUENCE [LARGE SCALE GENOMIC DNA]</scope>
    <source>
        <strain>ATCC 51907 / DSM 11121 / KW20 / Rd</strain>
    </source>
</reference>
<reference key="2">
    <citation type="journal article" date="2016" name="Proc. Natl. Acad. Sci. U.S.A.">
        <title>Assignment of function to a domain of unknown function: DUF1537 is a new kinase family in catabolic pathways for acid sugars.</title>
        <authorList>
            <person name="Zhang X."/>
            <person name="Carter M.S."/>
            <person name="Vetting M.W."/>
            <person name="San Francisco B."/>
            <person name="Zhao S."/>
            <person name="Al-Obaidi N.F."/>
            <person name="Solbiati J.O."/>
            <person name="Thiaville J.J."/>
            <person name="de Crecy-Lagard V."/>
            <person name="Jacobson M.P."/>
            <person name="Almo S.C."/>
            <person name="Gerlt J.A."/>
        </authorList>
    </citation>
    <scope>FUNCTION</scope>
    <scope>CATALYTIC ACTIVITY</scope>
    <source>
        <strain>ATCC 51907 / DSM 11121 / KW20 / Rd</strain>
    </source>
</reference>
<sequence>MPKFAANLTMMFNEVPFLDRFEAAAKAGFKYVEFLWPYDYPAQELKAILDKHGLKVVLFNTPAGDVNKGEWGGSAIPGREADSHRDIDLALEYALALGCPNVHIMSAVVPEGASREEYKQTFIKNVRYASDKYKPYGIKIQLEALSPEVKPNYLLKSQFDTLEVVELVDRDNVFVQLDYFHAQNVDGNLARLTDKLNGKFAHVQIASVPDRHEPDEGEINYQYIFDKLDEIGYTGYVGCEYKPRGETVTGLDWFQKYK</sequence>
<keyword id="KW-0119">Carbohydrate metabolism</keyword>
<keyword id="KW-0413">Isomerase</keyword>
<keyword id="KW-0460">Magnesium</keyword>
<keyword id="KW-0479">Metal-binding</keyword>
<keyword id="KW-1185">Reference proteome</keyword>
<proteinExistence type="evidence at protein level"/>